<keyword id="KW-0067">ATP-binding</keyword>
<keyword id="KW-0289">Folate biosynthesis</keyword>
<keyword id="KW-0436">Ligase</keyword>
<keyword id="KW-0460">Magnesium</keyword>
<keyword id="KW-0479">Metal-binding</keyword>
<keyword id="KW-0547">Nucleotide-binding</keyword>
<keyword id="KW-0554">One-carbon metabolism</keyword>
<keyword id="KW-1185">Reference proteome</keyword>
<gene>
    <name type="primary">folC</name>
    <name type="ordered locus">HI_1261</name>
</gene>
<feature type="chain" id="PRO_0000168304" description="Dihydrofolate synthase/folylpolyglutamate synthase">
    <location>
        <begin position="1"/>
        <end position="437"/>
    </location>
</feature>
<feature type="binding site" evidence="1">
    <location>
        <begin position="28"/>
        <end position="30"/>
    </location>
    <ligand>
        <name>7,8-dihydropteroate</name>
        <dbReference type="ChEBI" id="CHEBI:17839"/>
    </ligand>
</feature>
<feature type="binding site" evidence="1">
    <location>
        <begin position="58"/>
        <end position="61"/>
    </location>
    <ligand>
        <name>ATP</name>
        <dbReference type="ChEBI" id="CHEBI:30616"/>
    </ligand>
</feature>
<feature type="binding site" evidence="1">
    <location>
        <position position="82"/>
    </location>
    <ligand>
        <name>Mg(2+)</name>
        <dbReference type="ChEBI" id="CHEBI:18420"/>
        <label>1</label>
    </ligand>
</feature>
<feature type="binding site" evidence="1">
    <location>
        <begin position="120"/>
        <end position="123"/>
    </location>
    <ligand>
        <name>7,8-dihydropteroate</name>
        <dbReference type="ChEBI" id="CHEBI:17839"/>
    </ligand>
</feature>
<feature type="binding site" evidence="1">
    <location>
        <position position="144"/>
    </location>
    <ligand>
        <name>Mg(2+)</name>
        <dbReference type="ChEBI" id="CHEBI:18420"/>
        <label>1</label>
    </ligand>
</feature>
<feature type="binding site" evidence="1">
    <location>
        <begin position="151"/>
        <end position="153"/>
    </location>
    <ligand>
        <name>7,8-dihydropteroate</name>
        <dbReference type="ChEBI" id="CHEBI:17839"/>
    </ligand>
</feature>
<feature type="binding site" evidence="1">
    <location>
        <position position="171"/>
    </location>
    <ligand>
        <name>Mg(2+)</name>
        <dbReference type="ChEBI" id="CHEBI:18420"/>
        <label>2</label>
    </ligand>
</feature>
<feature type="binding site" evidence="1">
    <location>
        <position position="255"/>
    </location>
    <ligand>
        <name>ATP</name>
        <dbReference type="ChEBI" id="CHEBI:30616"/>
    </ligand>
</feature>
<feature type="binding site" evidence="1">
    <location>
        <position position="287"/>
    </location>
    <ligand>
        <name>ATP</name>
        <dbReference type="ChEBI" id="CHEBI:30616"/>
    </ligand>
</feature>
<feature type="binding site" evidence="1">
    <location>
        <position position="316"/>
    </location>
    <ligand>
        <name>ATP</name>
        <dbReference type="ChEBI" id="CHEBI:30616"/>
    </ligand>
</feature>
<name>FOLC_HAEIN</name>
<evidence type="ECO:0000250" key="1">
    <source>
        <dbReference type="UniProtKB" id="P08192"/>
    </source>
</evidence>
<evidence type="ECO:0000305" key="2"/>
<proteinExistence type="inferred from homology"/>
<reference key="1">
    <citation type="journal article" date="1995" name="Science">
        <title>Whole-genome random sequencing and assembly of Haemophilus influenzae Rd.</title>
        <authorList>
            <person name="Fleischmann R.D."/>
            <person name="Adams M.D."/>
            <person name="White O."/>
            <person name="Clayton R.A."/>
            <person name="Kirkness E.F."/>
            <person name="Kerlavage A.R."/>
            <person name="Bult C.J."/>
            <person name="Tomb J.-F."/>
            <person name="Dougherty B.A."/>
            <person name="Merrick J.M."/>
            <person name="McKenney K."/>
            <person name="Sutton G.G."/>
            <person name="FitzHugh W."/>
            <person name="Fields C.A."/>
            <person name="Gocayne J.D."/>
            <person name="Scott J.D."/>
            <person name="Shirley R."/>
            <person name="Liu L.-I."/>
            <person name="Glodek A."/>
            <person name="Kelley J.M."/>
            <person name="Weidman J.F."/>
            <person name="Phillips C.A."/>
            <person name="Spriggs T."/>
            <person name="Hedblom E."/>
            <person name="Cotton M.D."/>
            <person name="Utterback T.R."/>
            <person name="Hanna M.C."/>
            <person name="Nguyen D.T."/>
            <person name="Saudek D.M."/>
            <person name="Brandon R.C."/>
            <person name="Fine L.D."/>
            <person name="Fritchman J.L."/>
            <person name="Fuhrmann J.L."/>
            <person name="Geoghagen N.S.M."/>
            <person name="Gnehm C.L."/>
            <person name="McDonald L.A."/>
            <person name="Small K.V."/>
            <person name="Fraser C.M."/>
            <person name="Smith H.O."/>
            <person name="Venter J.C."/>
        </authorList>
    </citation>
    <scope>NUCLEOTIDE SEQUENCE [LARGE SCALE GENOMIC DNA]</scope>
    <source>
        <strain>ATCC 51907 / DSM 11121 / KW20 / Rd</strain>
    </source>
</reference>
<comment type="function">
    <text evidence="1">Functions in two distinct reactions of the de novo folate biosynthetic pathway. Catalyzes the addition of a glutamate residue to dihydropteroate (7,8-dihydropteroate or H2Pte) to form dihydrofolate (7,8-dihydrofolate monoglutamate or H2Pte-Glu). Also catalyzes successive additions of L-glutamate to tetrahydrofolate or 10-formyltetrahydrofolate or 5,10-methylenetetrahydrofolate, leading to folylpolyglutamate derivatives.</text>
</comment>
<comment type="catalytic activity">
    <reaction evidence="1">
        <text>7,8-dihydropteroate + L-glutamate + ATP = 7,8-dihydrofolate + ADP + phosphate + H(+)</text>
        <dbReference type="Rhea" id="RHEA:23584"/>
        <dbReference type="ChEBI" id="CHEBI:15378"/>
        <dbReference type="ChEBI" id="CHEBI:17839"/>
        <dbReference type="ChEBI" id="CHEBI:29985"/>
        <dbReference type="ChEBI" id="CHEBI:30616"/>
        <dbReference type="ChEBI" id="CHEBI:43474"/>
        <dbReference type="ChEBI" id="CHEBI:57451"/>
        <dbReference type="ChEBI" id="CHEBI:456216"/>
        <dbReference type="EC" id="6.3.2.12"/>
    </reaction>
</comment>
<comment type="catalytic activity">
    <reaction evidence="1">
        <text>(6S)-5,6,7,8-tetrahydrofolyl-(gamma-L-Glu)(n) + L-glutamate + ATP = (6S)-5,6,7,8-tetrahydrofolyl-(gamma-L-Glu)(n+1) + ADP + phosphate + H(+)</text>
        <dbReference type="Rhea" id="RHEA:10580"/>
        <dbReference type="Rhea" id="RHEA-COMP:14738"/>
        <dbReference type="Rhea" id="RHEA-COMP:14740"/>
        <dbReference type="ChEBI" id="CHEBI:15378"/>
        <dbReference type="ChEBI" id="CHEBI:29985"/>
        <dbReference type="ChEBI" id="CHEBI:30616"/>
        <dbReference type="ChEBI" id="CHEBI:43474"/>
        <dbReference type="ChEBI" id="CHEBI:141005"/>
        <dbReference type="ChEBI" id="CHEBI:456216"/>
        <dbReference type="EC" id="6.3.2.17"/>
    </reaction>
</comment>
<comment type="catalytic activity">
    <reaction evidence="1">
        <text>10-formyltetrahydrofolyl-(gamma-L-Glu)(n) + L-glutamate + ATP = 10-formyltetrahydrofolyl-(gamma-L-Glu)(n+1) + ADP + phosphate + H(+)</text>
        <dbReference type="Rhea" id="RHEA:51904"/>
        <dbReference type="Rhea" id="RHEA-COMP:13088"/>
        <dbReference type="Rhea" id="RHEA-COMP:14300"/>
        <dbReference type="ChEBI" id="CHEBI:15378"/>
        <dbReference type="ChEBI" id="CHEBI:29985"/>
        <dbReference type="ChEBI" id="CHEBI:30616"/>
        <dbReference type="ChEBI" id="CHEBI:43474"/>
        <dbReference type="ChEBI" id="CHEBI:134413"/>
        <dbReference type="ChEBI" id="CHEBI:456216"/>
        <dbReference type="EC" id="6.3.2.17"/>
    </reaction>
</comment>
<comment type="catalytic activity">
    <reaction evidence="1">
        <text>(6R)-5,10-methylenetetrahydrofolyl-(gamma-L-Glu)(n) + L-glutamate + ATP = (6R)-5,10-methylenetetrahydrofolyl-(gamma-L-Glu)(n+1) + ADP + phosphate + H(+)</text>
        <dbReference type="Rhea" id="RHEA:51912"/>
        <dbReference type="Rhea" id="RHEA-COMP:13257"/>
        <dbReference type="Rhea" id="RHEA-COMP:13258"/>
        <dbReference type="ChEBI" id="CHEBI:15378"/>
        <dbReference type="ChEBI" id="CHEBI:29985"/>
        <dbReference type="ChEBI" id="CHEBI:30616"/>
        <dbReference type="ChEBI" id="CHEBI:43474"/>
        <dbReference type="ChEBI" id="CHEBI:136572"/>
        <dbReference type="ChEBI" id="CHEBI:456216"/>
        <dbReference type="EC" id="6.3.2.17"/>
    </reaction>
</comment>
<comment type="cofactor">
    <cofactor evidence="1">
        <name>Mg(2+)</name>
        <dbReference type="ChEBI" id="CHEBI:18420"/>
    </cofactor>
    <text evidence="1">Binds 2 Mg(2+) ions per subunit.</text>
</comment>
<comment type="pathway">
    <text evidence="1">Cofactor biosynthesis; tetrahydrofolate biosynthesis; 7,8-dihydrofolate from 2-amino-4-hydroxy-6-hydroxymethyl-7,8-dihydropteridine diphosphate and 4-aminobenzoate: step 2/2.</text>
</comment>
<comment type="pathway">
    <text evidence="1">Cofactor biosynthesis; tetrahydrofolylpolyglutamate biosynthesis.</text>
</comment>
<comment type="subunit">
    <text evidence="1">Monomer.</text>
</comment>
<comment type="similarity">
    <text evidence="2">Belongs to the folylpolyglutamate synthase family.</text>
</comment>
<accession>P43775</accession>
<dbReference type="EC" id="6.3.2.12"/>
<dbReference type="EC" id="6.3.2.17"/>
<dbReference type="EMBL" id="L42023">
    <property type="protein sequence ID" value="AAC22914.1"/>
    <property type="molecule type" value="Genomic_DNA"/>
</dbReference>
<dbReference type="PIR" id="C64113">
    <property type="entry name" value="C64113"/>
</dbReference>
<dbReference type="RefSeq" id="NP_439416.1">
    <property type="nucleotide sequence ID" value="NC_000907.1"/>
</dbReference>
<dbReference type="SMR" id="P43775"/>
<dbReference type="STRING" id="71421.HI_1261"/>
<dbReference type="EnsemblBacteria" id="AAC22914">
    <property type="protein sequence ID" value="AAC22914"/>
    <property type="gene ID" value="HI_1261"/>
</dbReference>
<dbReference type="KEGG" id="hin:HI_1261"/>
<dbReference type="PATRIC" id="fig|71421.8.peg.1313"/>
<dbReference type="eggNOG" id="COG0285">
    <property type="taxonomic scope" value="Bacteria"/>
</dbReference>
<dbReference type="HOGENOM" id="CLU_015869_1_0_6"/>
<dbReference type="OrthoDB" id="9809356at2"/>
<dbReference type="PhylomeDB" id="P43775"/>
<dbReference type="BioCyc" id="HINF71421:G1GJ1-1289-MONOMER"/>
<dbReference type="UniPathway" id="UPA00077">
    <property type="reaction ID" value="UER00157"/>
</dbReference>
<dbReference type="UniPathway" id="UPA00850"/>
<dbReference type="Proteomes" id="UP000000579">
    <property type="component" value="Chromosome"/>
</dbReference>
<dbReference type="GO" id="GO:0005737">
    <property type="term" value="C:cytoplasm"/>
    <property type="evidence" value="ECO:0000318"/>
    <property type="project" value="GO_Central"/>
</dbReference>
<dbReference type="GO" id="GO:0005524">
    <property type="term" value="F:ATP binding"/>
    <property type="evidence" value="ECO:0007669"/>
    <property type="project" value="UniProtKB-KW"/>
</dbReference>
<dbReference type="GO" id="GO:0008841">
    <property type="term" value="F:dihydrofolate synthase activity"/>
    <property type="evidence" value="ECO:0000318"/>
    <property type="project" value="GO_Central"/>
</dbReference>
<dbReference type="GO" id="GO:0046872">
    <property type="term" value="F:metal ion binding"/>
    <property type="evidence" value="ECO:0007669"/>
    <property type="project" value="UniProtKB-KW"/>
</dbReference>
<dbReference type="GO" id="GO:0004326">
    <property type="term" value="F:tetrahydrofolylpolyglutamate synthase activity"/>
    <property type="evidence" value="ECO:0000318"/>
    <property type="project" value="GO_Central"/>
</dbReference>
<dbReference type="GO" id="GO:0046656">
    <property type="term" value="P:folic acid biosynthetic process"/>
    <property type="evidence" value="ECO:0007669"/>
    <property type="project" value="UniProtKB-KW"/>
</dbReference>
<dbReference type="GO" id="GO:0009396">
    <property type="term" value="P:folic acid-containing compound biosynthetic process"/>
    <property type="evidence" value="ECO:0000318"/>
    <property type="project" value="GO_Central"/>
</dbReference>
<dbReference type="GO" id="GO:0006730">
    <property type="term" value="P:one-carbon metabolic process"/>
    <property type="evidence" value="ECO:0007669"/>
    <property type="project" value="UniProtKB-KW"/>
</dbReference>
<dbReference type="GO" id="GO:0046654">
    <property type="term" value="P:tetrahydrofolate biosynthetic process"/>
    <property type="evidence" value="ECO:0007669"/>
    <property type="project" value="UniProtKB-UniPathway"/>
</dbReference>
<dbReference type="FunFam" id="3.40.1190.10:FF:000004">
    <property type="entry name" value="Dihydrofolate synthase/folylpolyglutamate synthase"/>
    <property type="match status" value="1"/>
</dbReference>
<dbReference type="Gene3D" id="3.90.190.20">
    <property type="entry name" value="Mur ligase, C-terminal domain"/>
    <property type="match status" value="1"/>
</dbReference>
<dbReference type="Gene3D" id="3.40.1190.10">
    <property type="entry name" value="Mur-like, catalytic domain"/>
    <property type="match status" value="1"/>
</dbReference>
<dbReference type="InterPro" id="IPR001645">
    <property type="entry name" value="Folylpolyglutamate_synth"/>
</dbReference>
<dbReference type="InterPro" id="IPR018109">
    <property type="entry name" value="Folylpolyglutamate_synth_CS"/>
</dbReference>
<dbReference type="InterPro" id="IPR036565">
    <property type="entry name" value="Mur-like_cat_sf"/>
</dbReference>
<dbReference type="InterPro" id="IPR004101">
    <property type="entry name" value="Mur_ligase_C"/>
</dbReference>
<dbReference type="InterPro" id="IPR036615">
    <property type="entry name" value="Mur_ligase_C_dom_sf"/>
</dbReference>
<dbReference type="InterPro" id="IPR013221">
    <property type="entry name" value="Mur_ligase_cen"/>
</dbReference>
<dbReference type="NCBIfam" id="TIGR01499">
    <property type="entry name" value="folC"/>
    <property type="match status" value="1"/>
</dbReference>
<dbReference type="NCBIfam" id="NF008101">
    <property type="entry name" value="PRK10846.1"/>
    <property type="match status" value="1"/>
</dbReference>
<dbReference type="PANTHER" id="PTHR11136:SF0">
    <property type="entry name" value="DIHYDROFOLATE SYNTHETASE-RELATED"/>
    <property type="match status" value="1"/>
</dbReference>
<dbReference type="PANTHER" id="PTHR11136">
    <property type="entry name" value="FOLYLPOLYGLUTAMATE SYNTHASE-RELATED"/>
    <property type="match status" value="1"/>
</dbReference>
<dbReference type="Pfam" id="PF02875">
    <property type="entry name" value="Mur_ligase_C"/>
    <property type="match status" value="1"/>
</dbReference>
<dbReference type="Pfam" id="PF08245">
    <property type="entry name" value="Mur_ligase_M"/>
    <property type="match status" value="1"/>
</dbReference>
<dbReference type="PIRSF" id="PIRSF001563">
    <property type="entry name" value="Folylpolyglu_synth"/>
    <property type="match status" value="1"/>
</dbReference>
<dbReference type="SUPFAM" id="SSF53623">
    <property type="entry name" value="MurD-like peptide ligases, catalytic domain"/>
    <property type="match status" value="1"/>
</dbReference>
<dbReference type="SUPFAM" id="SSF53244">
    <property type="entry name" value="MurD-like peptide ligases, peptide-binding domain"/>
    <property type="match status" value="1"/>
</dbReference>
<dbReference type="PROSITE" id="PS01011">
    <property type="entry name" value="FOLYLPOLYGLU_SYNT_1"/>
    <property type="match status" value="1"/>
</dbReference>
<dbReference type="PROSITE" id="PS01012">
    <property type="entry name" value="FOLYLPOLYGLU_SYNT_2"/>
    <property type="match status" value="1"/>
</dbReference>
<protein>
    <recommendedName>
        <fullName>Dihydrofolate synthase/folylpolyglutamate synthase</fullName>
        <shortName>DHFS / FPGS</shortName>
        <ecNumber>6.3.2.12</ecNumber>
        <ecNumber>6.3.2.17</ecNumber>
    </recommendedName>
    <alternativeName>
        <fullName>Folylpoly-gamma-glutamate synthetase-dihydrofolate synthetase</fullName>
    </alternativeName>
    <alternativeName>
        <fullName>Folylpolyglutamate synthetase</fullName>
    </alternativeName>
    <alternativeName>
        <fullName>Tetrahydrofolylpolyglutamate synthase</fullName>
    </alternativeName>
</protein>
<sequence length="437" mass="48826">MNNMQLKATSPLAEWLSYLEKSHFKPIDLGLDRIKSVAEKLDLLHPVPYVITVGGTNGKGTTCRLLETILLNHGLRVGVYSSPHLLRYNERVRIQNQDLPDEAHTASFAFIDENKTESLTYFEFSTLSALHLFKQAKLDVVILEVGLGGRLDATNIVDSHLAVITSIDIDHTDFLGDTREAIAFEKAGIFRENCPVVIGEPNVPQTMLDQAEKLHCQVARRDVDWLFEQNAENWQWQNKKVRLENLPFCQIPLANAATVLAAVQYLPFDISEQTLRKSLQEVELVGRFQAIKTDKREKLADYLGVPVETLPTIIVDVGHNPHAAKYLSEKLTALKRSIEGKMIAVCGMLKDKDANGVFEHLTPIIDEWHCVTLGGYRGQSGDELVEKLKSHFPNIQATSDNSVMDGVCTALKSAVKNDVVLVFGSFHTVAEFWAVVE</sequence>
<organism>
    <name type="scientific">Haemophilus influenzae (strain ATCC 51907 / DSM 11121 / KW20 / Rd)</name>
    <dbReference type="NCBI Taxonomy" id="71421"/>
    <lineage>
        <taxon>Bacteria</taxon>
        <taxon>Pseudomonadati</taxon>
        <taxon>Pseudomonadota</taxon>
        <taxon>Gammaproteobacteria</taxon>
        <taxon>Pasteurellales</taxon>
        <taxon>Pasteurellaceae</taxon>
        <taxon>Haemophilus</taxon>
    </lineage>
</organism>